<sequence length="212" mass="23323">MEDRFSAITNLHGDHKQAIFGVYVGHGGVKAAEFAAKNLDKNIVEEVVDATFLKEEGFKGGSSCVTALVSEGSLVVSNAGDCRAVMSVGEMMNGKELKPREDMLIRFTLWRIQGSLVVPRGIGDAQLKKWVIAEPETKISRVEHDHEFLILASHGLWDKVSNQEAVDIARPFCLRTEKPLLLAACKKLVDLSASRGSFDDISVMLIPLRQFV</sequence>
<comment type="catalytic activity">
    <reaction>
        <text>O-phospho-L-seryl-[protein] + H2O = L-seryl-[protein] + phosphate</text>
        <dbReference type="Rhea" id="RHEA:20629"/>
        <dbReference type="Rhea" id="RHEA-COMP:9863"/>
        <dbReference type="Rhea" id="RHEA-COMP:11604"/>
        <dbReference type="ChEBI" id="CHEBI:15377"/>
        <dbReference type="ChEBI" id="CHEBI:29999"/>
        <dbReference type="ChEBI" id="CHEBI:43474"/>
        <dbReference type="ChEBI" id="CHEBI:83421"/>
        <dbReference type="EC" id="3.1.3.16"/>
    </reaction>
</comment>
<comment type="catalytic activity">
    <reaction>
        <text>O-phospho-L-threonyl-[protein] + H2O = L-threonyl-[protein] + phosphate</text>
        <dbReference type="Rhea" id="RHEA:47004"/>
        <dbReference type="Rhea" id="RHEA-COMP:11060"/>
        <dbReference type="Rhea" id="RHEA-COMP:11605"/>
        <dbReference type="ChEBI" id="CHEBI:15377"/>
        <dbReference type="ChEBI" id="CHEBI:30013"/>
        <dbReference type="ChEBI" id="CHEBI:43474"/>
        <dbReference type="ChEBI" id="CHEBI:61977"/>
        <dbReference type="EC" id="3.1.3.16"/>
    </reaction>
</comment>
<comment type="cofactor">
    <cofactor evidence="1">
        <name>Mg(2+)</name>
        <dbReference type="ChEBI" id="CHEBI:18420"/>
    </cofactor>
    <cofactor evidence="1">
        <name>Mn(2+)</name>
        <dbReference type="ChEBI" id="CHEBI:29035"/>
    </cofactor>
</comment>
<comment type="similarity">
    <text evidence="3">Belongs to the PP2C family.</text>
</comment>
<comment type="caution">
    <text evidence="3">Although related to the protein phosphatase 2C family, lacks some of the conserved residues that bind manganese, suggesting it has no phosphatase activity.</text>
</comment>
<comment type="caution">
    <text evidence="3">Could be the product of a pseudogene.</text>
</comment>
<protein>
    <recommendedName>
        <fullName>Putative protein phosphatase 2C 53</fullName>
        <shortName>AtPP2C53</shortName>
        <ecNumber>3.1.3.16</ecNumber>
    </recommendedName>
    <alternativeName>
        <fullName>Protein phosphatase AP2C5</fullName>
    </alternativeName>
</protein>
<gene>
    <name type="ordered locus">At4g08260</name>
    <name type="ORF">T12G13.100</name>
</gene>
<organism>
    <name type="scientific">Arabidopsis thaliana</name>
    <name type="common">Mouse-ear cress</name>
    <dbReference type="NCBI Taxonomy" id="3702"/>
    <lineage>
        <taxon>Eukaryota</taxon>
        <taxon>Viridiplantae</taxon>
        <taxon>Streptophyta</taxon>
        <taxon>Embryophyta</taxon>
        <taxon>Tracheophyta</taxon>
        <taxon>Spermatophyta</taxon>
        <taxon>Magnoliopsida</taxon>
        <taxon>eudicotyledons</taxon>
        <taxon>Gunneridae</taxon>
        <taxon>Pentapetalae</taxon>
        <taxon>rosids</taxon>
        <taxon>malvids</taxon>
        <taxon>Brassicales</taxon>
        <taxon>Brassicaceae</taxon>
        <taxon>Camelineae</taxon>
        <taxon>Arabidopsis</taxon>
    </lineage>
</organism>
<proteinExistence type="uncertain"/>
<reference key="1">
    <citation type="journal article" date="1999" name="Nature">
        <title>Sequence and analysis of chromosome 4 of the plant Arabidopsis thaliana.</title>
        <authorList>
            <person name="Mayer K.F.X."/>
            <person name="Schueller C."/>
            <person name="Wambutt R."/>
            <person name="Murphy G."/>
            <person name="Volckaert G."/>
            <person name="Pohl T."/>
            <person name="Duesterhoeft A."/>
            <person name="Stiekema W."/>
            <person name="Entian K.-D."/>
            <person name="Terryn N."/>
            <person name="Harris B."/>
            <person name="Ansorge W."/>
            <person name="Brandt P."/>
            <person name="Grivell L.A."/>
            <person name="Rieger M."/>
            <person name="Weichselgartner M."/>
            <person name="de Simone V."/>
            <person name="Obermaier B."/>
            <person name="Mache R."/>
            <person name="Mueller M."/>
            <person name="Kreis M."/>
            <person name="Delseny M."/>
            <person name="Puigdomenech P."/>
            <person name="Watson M."/>
            <person name="Schmidtheini T."/>
            <person name="Reichert B."/>
            <person name="Portetelle D."/>
            <person name="Perez-Alonso M."/>
            <person name="Boutry M."/>
            <person name="Bancroft I."/>
            <person name="Vos P."/>
            <person name="Hoheisel J."/>
            <person name="Zimmermann W."/>
            <person name="Wedler H."/>
            <person name="Ridley P."/>
            <person name="Langham S.-A."/>
            <person name="McCullagh B."/>
            <person name="Bilham L."/>
            <person name="Robben J."/>
            <person name="van der Schueren J."/>
            <person name="Grymonprez B."/>
            <person name="Chuang Y.-J."/>
            <person name="Vandenbussche F."/>
            <person name="Braeken M."/>
            <person name="Weltjens I."/>
            <person name="Voet M."/>
            <person name="Bastiaens I."/>
            <person name="Aert R."/>
            <person name="Defoor E."/>
            <person name="Weitzenegger T."/>
            <person name="Bothe G."/>
            <person name="Ramsperger U."/>
            <person name="Hilbert H."/>
            <person name="Braun M."/>
            <person name="Holzer E."/>
            <person name="Brandt A."/>
            <person name="Peters S."/>
            <person name="van Staveren M."/>
            <person name="Dirkse W."/>
            <person name="Mooijman P."/>
            <person name="Klein Lankhorst R."/>
            <person name="Rose M."/>
            <person name="Hauf J."/>
            <person name="Koetter P."/>
            <person name="Berneiser S."/>
            <person name="Hempel S."/>
            <person name="Feldpausch M."/>
            <person name="Lamberth S."/>
            <person name="Van den Daele H."/>
            <person name="De Keyser A."/>
            <person name="Buysshaert C."/>
            <person name="Gielen J."/>
            <person name="Villarroel R."/>
            <person name="De Clercq R."/>
            <person name="van Montagu M."/>
            <person name="Rogers J."/>
            <person name="Cronin A."/>
            <person name="Quail M.A."/>
            <person name="Bray-Allen S."/>
            <person name="Clark L."/>
            <person name="Doggett J."/>
            <person name="Hall S."/>
            <person name="Kay M."/>
            <person name="Lennard N."/>
            <person name="McLay K."/>
            <person name="Mayes R."/>
            <person name="Pettett A."/>
            <person name="Rajandream M.A."/>
            <person name="Lyne M."/>
            <person name="Benes V."/>
            <person name="Rechmann S."/>
            <person name="Borkova D."/>
            <person name="Bloecker H."/>
            <person name="Scharfe M."/>
            <person name="Grimm M."/>
            <person name="Loehnert T.-H."/>
            <person name="Dose S."/>
            <person name="de Haan M."/>
            <person name="Maarse A.C."/>
            <person name="Schaefer M."/>
            <person name="Mueller-Auer S."/>
            <person name="Gabel C."/>
            <person name="Fuchs M."/>
            <person name="Fartmann B."/>
            <person name="Granderath K."/>
            <person name="Dauner D."/>
            <person name="Herzl A."/>
            <person name="Neumann S."/>
            <person name="Argiriou A."/>
            <person name="Vitale D."/>
            <person name="Liguori R."/>
            <person name="Piravandi E."/>
            <person name="Massenet O."/>
            <person name="Quigley F."/>
            <person name="Clabauld G."/>
            <person name="Muendlein A."/>
            <person name="Felber R."/>
            <person name="Schnabl S."/>
            <person name="Hiller R."/>
            <person name="Schmidt W."/>
            <person name="Lecharny A."/>
            <person name="Aubourg S."/>
            <person name="Chefdor F."/>
            <person name="Cooke R."/>
            <person name="Berger C."/>
            <person name="Monfort A."/>
            <person name="Casacuberta E."/>
            <person name="Gibbons T."/>
            <person name="Weber N."/>
            <person name="Vandenbol M."/>
            <person name="Bargues M."/>
            <person name="Terol J."/>
            <person name="Torres A."/>
            <person name="Perez-Perez A."/>
            <person name="Purnelle B."/>
            <person name="Bent E."/>
            <person name="Johnson S."/>
            <person name="Tacon D."/>
            <person name="Jesse T."/>
            <person name="Heijnen L."/>
            <person name="Schwarz S."/>
            <person name="Scholler P."/>
            <person name="Heber S."/>
            <person name="Francs P."/>
            <person name="Bielke C."/>
            <person name="Frishman D."/>
            <person name="Haase D."/>
            <person name="Lemcke K."/>
            <person name="Mewes H.-W."/>
            <person name="Stocker S."/>
            <person name="Zaccaria P."/>
            <person name="Bevan M."/>
            <person name="Wilson R.K."/>
            <person name="de la Bastide M."/>
            <person name="Habermann K."/>
            <person name="Parnell L."/>
            <person name="Dedhia N."/>
            <person name="Gnoj L."/>
            <person name="Schutz K."/>
            <person name="Huang E."/>
            <person name="Spiegel L."/>
            <person name="Sekhon M."/>
            <person name="Murray J."/>
            <person name="Sheet P."/>
            <person name="Cordes M."/>
            <person name="Abu-Threideh J."/>
            <person name="Stoneking T."/>
            <person name="Kalicki J."/>
            <person name="Graves T."/>
            <person name="Harmon G."/>
            <person name="Edwards J."/>
            <person name="Latreille P."/>
            <person name="Courtney L."/>
            <person name="Cloud J."/>
            <person name="Abbott A."/>
            <person name="Scott K."/>
            <person name="Johnson D."/>
            <person name="Minx P."/>
            <person name="Bentley D."/>
            <person name="Fulton B."/>
            <person name="Miller N."/>
            <person name="Greco T."/>
            <person name="Kemp K."/>
            <person name="Kramer J."/>
            <person name="Fulton L."/>
            <person name="Mardis E."/>
            <person name="Dante M."/>
            <person name="Pepin K."/>
            <person name="Hillier L.W."/>
            <person name="Nelson J."/>
            <person name="Spieth J."/>
            <person name="Ryan E."/>
            <person name="Andrews S."/>
            <person name="Geisel C."/>
            <person name="Layman D."/>
            <person name="Du H."/>
            <person name="Ali J."/>
            <person name="Berghoff A."/>
            <person name="Jones K."/>
            <person name="Drone K."/>
            <person name="Cotton M."/>
            <person name="Joshu C."/>
            <person name="Antonoiu B."/>
            <person name="Zidanic M."/>
            <person name="Strong C."/>
            <person name="Sun H."/>
            <person name="Lamar B."/>
            <person name="Yordan C."/>
            <person name="Ma P."/>
            <person name="Zhong J."/>
            <person name="Preston R."/>
            <person name="Vil D."/>
            <person name="Shekher M."/>
            <person name="Matero A."/>
            <person name="Shah R."/>
            <person name="Swaby I.K."/>
            <person name="O'Shaughnessy A."/>
            <person name="Rodriguez M."/>
            <person name="Hoffman J."/>
            <person name="Till S."/>
            <person name="Granat S."/>
            <person name="Shohdy N."/>
            <person name="Hasegawa A."/>
            <person name="Hameed A."/>
            <person name="Lodhi M."/>
            <person name="Johnson A."/>
            <person name="Chen E."/>
            <person name="Marra M.A."/>
            <person name="Martienssen R."/>
            <person name="McCombie W.R."/>
        </authorList>
    </citation>
    <scope>NUCLEOTIDE SEQUENCE [LARGE SCALE GENOMIC DNA]</scope>
    <source>
        <strain>cv. Columbia</strain>
    </source>
</reference>
<reference key="2">
    <citation type="journal article" date="2017" name="Plant J.">
        <title>Araport11: a complete reannotation of the Arabidopsis thaliana reference genome.</title>
        <authorList>
            <person name="Cheng C.Y."/>
            <person name="Krishnakumar V."/>
            <person name="Chan A.P."/>
            <person name="Thibaud-Nissen F."/>
            <person name="Schobel S."/>
            <person name="Town C.D."/>
        </authorList>
    </citation>
    <scope>GENOME REANNOTATION</scope>
    <source>
        <strain>cv. Columbia</strain>
    </source>
</reference>
<reference key="3">
    <citation type="journal article" date="2008" name="BMC Genomics">
        <title>Genome-wide and expression analysis of protein phosphatase 2C in rice and Arabidopsis.</title>
        <authorList>
            <person name="Xue T."/>
            <person name="Wang D."/>
            <person name="Zhang S."/>
            <person name="Ehlting J."/>
            <person name="Ni F."/>
            <person name="Jacab S."/>
            <person name="Zheng C."/>
            <person name="Zhong Y."/>
        </authorList>
    </citation>
    <scope>GENE FAMILY</scope>
    <scope>NOMENCLATURE</scope>
</reference>
<feature type="chain" id="PRO_0000367977" description="Putative protein phosphatase 2C 53">
    <location>
        <begin position="1"/>
        <end position="212"/>
    </location>
</feature>
<feature type="domain" description="PPM-type phosphatase" evidence="2">
    <location>
        <begin position="1"/>
        <end position="208"/>
    </location>
</feature>
<feature type="binding site" evidence="1">
    <location>
        <position position="199"/>
    </location>
    <ligand>
        <name>Mn(2+)</name>
        <dbReference type="ChEBI" id="CHEBI:29035"/>
        <label>2</label>
    </ligand>
</feature>
<keyword id="KW-0378">Hydrolase</keyword>
<keyword id="KW-0460">Magnesium</keyword>
<keyword id="KW-0464">Manganese</keyword>
<keyword id="KW-0479">Metal-binding</keyword>
<keyword id="KW-0904">Protein phosphatase</keyword>
<keyword id="KW-1185">Reference proteome</keyword>
<name>P2C53_ARATH</name>
<accession>Q9SUF4</accession>
<evidence type="ECO:0000250" key="1"/>
<evidence type="ECO:0000255" key="2">
    <source>
        <dbReference type="PROSITE-ProRule" id="PRU01082"/>
    </source>
</evidence>
<evidence type="ECO:0000305" key="3"/>
<dbReference type="EC" id="3.1.3.16"/>
<dbReference type="EMBL" id="AL080252">
    <property type="protein sequence ID" value="CAB45796.1"/>
    <property type="molecule type" value="Genomic_DNA"/>
</dbReference>
<dbReference type="EMBL" id="AL161510">
    <property type="protein sequence ID" value="CAB81162.1"/>
    <property type="molecule type" value="Genomic_DNA"/>
</dbReference>
<dbReference type="EMBL" id="CP002687">
    <property type="protein sequence ID" value="AEE82615.1"/>
    <property type="molecule type" value="Genomic_DNA"/>
</dbReference>
<dbReference type="PIR" id="T10553">
    <property type="entry name" value="T10553"/>
</dbReference>
<dbReference type="RefSeq" id="NP_192566.1">
    <property type="nucleotide sequence ID" value="NM_116895.2"/>
</dbReference>
<dbReference type="SMR" id="Q9SUF4"/>
<dbReference type="STRING" id="3702.Q9SUF4"/>
<dbReference type="PaxDb" id="3702-AT4G08260.1"/>
<dbReference type="ProteomicsDB" id="248720"/>
<dbReference type="EnsemblPlants" id="AT4G08260.1">
    <property type="protein sequence ID" value="AT4G08260.1"/>
    <property type="gene ID" value="AT4G08260"/>
</dbReference>
<dbReference type="GeneID" id="826376"/>
<dbReference type="Gramene" id="AT4G08260.1">
    <property type="protein sequence ID" value="AT4G08260.1"/>
    <property type="gene ID" value="AT4G08260"/>
</dbReference>
<dbReference type="KEGG" id="ath:AT4G08260"/>
<dbReference type="Araport" id="AT4G08260"/>
<dbReference type="TAIR" id="AT4G08260"/>
<dbReference type="eggNOG" id="KOG0698">
    <property type="taxonomic scope" value="Eukaryota"/>
</dbReference>
<dbReference type="HOGENOM" id="CLU_013173_10_0_1"/>
<dbReference type="InParanoid" id="Q9SUF4"/>
<dbReference type="OMA" id="HEFLIMA"/>
<dbReference type="PhylomeDB" id="Q9SUF4"/>
<dbReference type="Proteomes" id="UP000006548">
    <property type="component" value="Chromosome 4"/>
</dbReference>
<dbReference type="ExpressionAtlas" id="Q9SUF4">
    <property type="expression patterns" value="baseline"/>
</dbReference>
<dbReference type="GO" id="GO:0046872">
    <property type="term" value="F:metal ion binding"/>
    <property type="evidence" value="ECO:0007669"/>
    <property type="project" value="UniProtKB-KW"/>
</dbReference>
<dbReference type="GO" id="GO:0004722">
    <property type="term" value="F:protein serine/threonine phosphatase activity"/>
    <property type="evidence" value="ECO:0007669"/>
    <property type="project" value="UniProtKB-EC"/>
</dbReference>
<dbReference type="CDD" id="cd00143">
    <property type="entry name" value="PP2Cc"/>
    <property type="match status" value="1"/>
</dbReference>
<dbReference type="FunFam" id="3.60.40.10:FF:000281">
    <property type="entry name" value="Protein phosphatase 2C family protein"/>
    <property type="match status" value="1"/>
</dbReference>
<dbReference type="FunFam" id="3.60.40.10:FF:000280">
    <property type="entry name" value="Putative protein phosphatase 2C-like protein 45"/>
    <property type="match status" value="1"/>
</dbReference>
<dbReference type="Gene3D" id="3.60.40.10">
    <property type="entry name" value="PPM-type phosphatase domain"/>
    <property type="match status" value="1"/>
</dbReference>
<dbReference type="InterPro" id="IPR015655">
    <property type="entry name" value="PP2C"/>
</dbReference>
<dbReference type="InterPro" id="IPR036457">
    <property type="entry name" value="PPM-type-like_dom_sf"/>
</dbReference>
<dbReference type="InterPro" id="IPR001932">
    <property type="entry name" value="PPM-type_phosphatase-like_dom"/>
</dbReference>
<dbReference type="PANTHER" id="PTHR47992">
    <property type="entry name" value="PROTEIN PHOSPHATASE"/>
    <property type="match status" value="1"/>
</dbReference>
<dbReference type="Pfam" id="PF00481">
    <property type="entry name" value="PP2C"/>
    <property type="match status" value="1"/>
</dbReference>
<dbReference type="SMART" id="SM00332">
    <property type="entry name" value="PP2Cc"/>
    <property type="match status" value="1"/>
</dbReference>
<dbReference type="SUPFAM" id="SSF81606">
    <property type="entry name" value="PP2C-like"/>
    <property type="match status" value="1"/>
</dbReference>
<dbReference type="PROSITE" id="PS51746">
    <property type="entry name" value="PPM_2"/>
    <property type="match status" value="1"/>
</dbReference>